<keyword id="KW-0025">Alternative splicing</keyword>
<keyword id="KW-1003">Cell membrane</keyword>
<keyword id="KW-1183">Host cell receptor for virus entry</keyword>
<keyword id="KW-0472">Membrane</keyword>
<keyword id="KW-0597">Phosphoprotein</keyword>
<keyword id="KW-0675">Receptor</keyword>
<keyword id="KW-1185">Reference proteome</keyword>
<keyword id="KW-0812">Transmembrane</keyword>
<keyword id="KW-1133">Transmembrane helix</keyword>
<dbReference type="EMBL" id="AF131096">
    <property type="protein sequence ID" value="AAF03482.1"/>
    <property type="molecule type" value="mRNA"/>
</dbReference>
<dbReference type="EMBL" id="AF131098">
    <property type="protein sequence ID" value="AAF03484.1"/>
    <property type="molecule type" value="mRNA"/>
</dbReference>
<dbReference type="EMBL" id="AF114753">
    <property type="protein sequence ID" value="AAD17206.1"/>
    <property type="molecule type" value="mRNA"/>
</dbReference>
<dbReference type="EMBL" id="AF198104">
    <property type="protein sequence ID" value="AAF13256.1"/>
    <property type="molecule type" value="mRNA"/>
</dbReference>
<dbReference type="EMBL" id="AK032148">
    <property type="protein sequence ID" value="BAC27724.1"/>
    <property type="molecule type" value="mRNA"/>
</dbReference>
<dbReference type="EMBL" id="AK033421">
    <property type="protein sequence ID" value="BAC28279.1"/>
    <property type="molecule type" value="mRNA"/>
</dbReference>
<dbReference type="EMBL" id="AK141660">
    <property type="protein sequence ID" value="BAE24789.1"/>
    <property type="molecule type" value="mRNA"/>
</dbReference>
<dbReference type="EMBL" id="AK147403">
    <property type="protein sequence ID" value="BAE27891.1"/>
    <property type="molecule type" value="mRNA"/>
</dbReference>
<dbReference type="EMBL" id="BC153872">
    <property type="protein sequence ID" value="AAI53873.1"/>
    <property type="molecule type" value="mRNA"/>
</dbReference>
<dbReference type="CCDS" id="CCDS15384.1">
    <molecule id="Q9Z0U0-1"/>
</dbReference>
<dbReference type="RefSeq" id="NP_035403.1">
    <molecule id="Q9Z0U0-1"/>
    <property type="nucleotide sequence ID" value="NM_011273.2"/>
</dbReference>
<dbReference type="SMR" id="Q9Z0U0"/>
<dbReference type="BioGRID" id="202901">
    <property type="interactions" value="1"/>
</dbReference>
<dbReference type="FunCoup" id="Q9Z0U0">
    <property type="interactions" value="2961"/>
</dbReference>
<dbReference type="STRING" id="10090.ENSMUSP00000027741"/>
<dbReference type="iPTMnet" id="Q9Z0U0"/>
<dbReference type="PhosphoSitePlus" id="Q9Z0U0"/>
<dbReference type="PaxDb" id="10090-ENSMUSP00000027741"/>
<dbReference type="PeptideAtlas" id="Q9Z0U0"/>
<dbReference type="ProteomicsDB" id="299800">
    <molecule id="Q9Z0U0-1"/>
</dbReference>
<dbReference type="ProteomicsDB" id="299801">
    <molecule id="Q9Z0U0-2"/>
</dbReference>
<dbReference type="Antibodypedia" id="20589">
    <property type="antibodies" value="188 antibodies from 29 providers"/>
</dbReference>
<dbReference type="DNASU" id="19775"/>
<dbReference type="Ensembl" id="ENSMUST00000027741.12">
    <molecule id="Q9Z0U0-1"/>
    <property type="protein sequence ID" value="ENSMUSP00000027741.6"/>
    <property type="gene ID" value="ENSMUSG00000026469.15"/>
</dbReference>
<dbReference type="Ensembl" id="ENSMUST00000111774.2">
    <molecule id="Q9Z0U0-2"/>
    <property type="protein sequence ID" value="ENSMUSP00000107404.2"/>
    <property type="gene ID" value="ENSMUSG00000026469.15"/>
</dbReference>
<dbReference type="GeneID" id="19775"/>
<dbReference type="KEGG" id="mmu:19775"/>
<dbReference type="UCSC" id="uc007dbf.1">
    <molecule id="Q9Z0U0-1"/>
    <property type="organism name" value="mouse"/>
</dbReference>
<dbReference type="UCSC" id="uc007dbh.1">
    <molecule id="Q9Z0U0-2"/>
    <property type="organism name" value="mouse"/>
</dbReference>
<dbReference type="AGR" id="MGI:97932"/>
<dbReference type="CTD" id="9213"/>
<dbReference type="MGI" id="MGI:97932">
    <property type="gene designation" value="Xpr1"/>
</dbReference>
<dbReference type="VEuPathDB" id="HostDB:ENSMUSG00000026469"/>
<dbReference type="eggNOG" id="KOG1162">
    <property type="taxonomic scope" value="Eukaryota"/>
</dbReference>
<dbReference type="GeneTree" id="ENSGT00500000044895"/>
<dbReference type="HOGENOM" id="CLU_006116_3_0_1"/>
<dbReference type="InParanoid" id="Q9Z0U0"/>
<dbReference type="OMA" id="ETSHFYT"/>
<dbReference type="OrthoDB" id="9970435at2759"/>
<dbReference type="PhylomeDB" id="Q9Z0U0"/>
<dbReference type="TreeFam" id="TF314643"/>
<dbReference type="BioGRID-ORCS" id="19775">
    <property type="hits" value="8 hits in 77 CRISPR screens"/>
</dbReference>
<dbReference type="ChiTaRS" id="Xpr1">
    <property type="organism name" value="mouse"/>
</dbReference>
<dbReference type="PRO" id="PR:Q9Z0U0"/>
<dbReference type="Proteomes" id="UP000000589">
    <property type="component" value="Chromosome 1"/>
</dbReference>
<dbReference type="RNAct" id="Q9Z0U0">
    <property type="molecule type" value="protein"/>
</dbReference>
<dbReference type="Bgee" id="ENSMUSG00000026469">
    <property type="expression patterns" value="Expressed in median eminence of neurohypophysis and 260 other cell types or tissues"/>
</dbReference>
<dbReference type="ExpressionAtlas" id="Q9Z0U0">
    <property type="expression patterns" value="baseline and differential"/>
</dbReference>
<dbReference type="GO" id="GO:0005886">
    <property type="term" value="C:plasma membrane"/>
    <property type="evidence" value="ECO:0000250"/>
    <property type="project" value="UniProtKB"/>
</dbReference>
<dbReference type="GO" id="GO:0015562">
    <property type="term" value="F:efflux transmembrane transporter activity"/>
    <property type="evidence" value="ECO:0000250"/>
    <property type="project" value="UniProtKB"/>
</dbReference>
<dbReference type="GO" id="GO:0000822">
    <property type="term" value="F:inositol hexakisphosphate binding"/>
    <property type="evidence" value="ECO:0000250"/>
    <property type="project" value="UniProtKB"/>
</dbReference>
<dbReference type="GO" id="GO:0005315">
    <property type="term" value="F:phosphate transmembrane transporter activity"/>
    <property type="evidence" value="ECO:0000250"/>
    <property type="project" value="UniProtKB"/>
</dbReference>
<dbReference type="GO" id="GO:0001618">
    <property type="term" value="F:virus receptor activity"/>
    <property type="evidence" value="ECO:0000314"/>
    <property type="project" value="MGI"/>
</dbReference>
<dbReference type="GO" id="GO:0030643">
    <property type="term" value="P:intracellular phosphate ion homeostasis"/>
    <property type="evidence" value="ECO:0000250"/>
    <property type="project" value="UniProtKB"/>
</dbReference>
<dbReference type="GO" id="GO:0035435">
    <property type="term" value="P:phosphate ion transmembrane transport"/>
    <property type="evidence" value="ECO:0000250"/>
    <property type="project" value="UniProtKB"/>
</dbReference>
<dbReference type="GO" id="GO:0009615">
    <property type="term" value="P:response to virus"/>
    <property type="evidence" value="ECO:0000314"/>
    <property type="project" value="MGI"/>
</dbReference>
<dbReference type="CDD" id="cd14477">
    <property type="entry name" value="SPX_XPR1_like"/>
    <property type="match status" value="1"/>
</dbReference>
<dbReference type="InterPro" id="IPR004342">
    <property type="entry name" value="EXS_C"/>
</dbReference>
<dbReference type="InterPro" id="IPR004331">
    <property type="entry name" value="SPX_dom"/>
</dbReference>
<dbReference type="PANTHER" id="PTHR10783:SF103">
    <property type="entry name" value="SOLUTE CARRIER FAMILY 53 MEMBER 1"/>
    <property type="match status" value="1"/>
</dbReference>
<dbReference type="PANTHER" id="PTHR10783">
    <property type="entry name" value="XENOTROPIC AND POLYTROPIC RETROVIRUS RECEPTOR 1-RELATED"/>
    <property type="match status" value="1"/>
</dbReference>
<dbReference type="Pfam" id="PF03124">
    <property type="entry name" value="EXS"/>
    <property type="match status" value="1"/>
</dbReference>
<dbReference type="Pfam" id="PF03105">
    <property type="entry name" value="SPX"/>
    <property type="match status" value="3"/>
</dbReference>
<dbReference type="PROSITE" id="PS51380">
    <property type="entry name" value="EXS"/>
    <property type="match status" value="1"/>
</dbReference>
<dbReference type="PROSITE" id="PS51382">
    <property type="entry name" value="SPX"/>
    <property type="match status" value="1"/>
</dbReference>
<organism>
    <name type="scientific">Mus musculus</name>
    <name type="common">Mouse</name>
    <dbReference type="NCBI Taxonomy" id="10090"/>
    <lineage>
        <taxon>Eukaryota</taxon>
        <taxon>Metazoa</taxon>
        <taxon>Chordata</taxon>
        <taxon>Craniata</taxon>
        <taxon>Vertebrata</taxon>
        <taxon>Euteleostomi</taxon>
        <taxon>Mammalia</taxon>
        <taxon>Eutheria</taxon>
        <taxon>Euarchontoglires</taxon>
        <taxon>Glires</taxon>
        <taxon>Rodentia</taxon>
        <taxon>Myomorpha</taxon>
        <taxon>Muroidea</taxon>
        <taxon>Muridae</taxon>
        <taxon>Murinae</taxon>
        <taxon>Mus</taxon>
        <taxon>Mus</taxon>
    </lineage>
</organism>
<gene>
    <name evidence="9" type="primary">Xpr1</name>
    <name evidence="10" type="synonym">Syg1</name>
</gene>
<protein>
    <recommendedName>
        <fullName evidence="1">Solute carrier family 53 member 1</fullName>
    </recommendedName>
    <alternativeName>
        <fullName evidence="1">Phosphate exporter SLC53A1</fullName>
    </alternativeName>
    <alternativeName>
        <fullName>Protein SYG1 homolog</fullName>
    </alternativeName>
    <alternativeName>
        <fullName>Rmc-1</fullName>
    </alternativeName>
    <alternativeName>
        <fullName>Xenotropic and polytropic retrovirus receptor 1</fullName>
    </alternativeName>
</protein>
<reference key="1">
    <citation type="journal article" date="1999" name="J. Virol.">
        <title>Polymorphisms of the cell surface receptor control mouse susceptibilities to xenotropic and polytropic leukemia viruses.</title>
        <authorList>
            <person name="Marin M."/>
            <person name="Tailor C.S."/>
            <person name="Nouri A."/>
            <person name="Kozak S.L."/>
            <person name="Kabat D."/>
        </authorList>
    </citation>
    <scope>NUCLEOTIDE SEQUENCE [MRNA] (ISOFORM 1)</scope>
    <scope>FUNCTION (MICROBIAL INFECTION)</scope>
    <scope>MUTAGENESIS OF THR-582</scope>
    <source>
        <strain>NIH Swiss</strain>
        <tissue>Kidney</tissue>
    </source>
</reference>
<reference key="2">
    <citation type="journal article" date="1999" name="Nat. Genet.">
        <title>Receptors for polytropic and xenotropic mouse leukaemia viruses encoded by a single gene at Rmc1.</title>
        <authorList>
            <person name="Yang Y.-L."/>
            <person name="Guo L."/>
            <person name="Xu S."/>
            <person name="Holland C.A."/>
            <person name="Kitamura T."/>
            <person name="Hunter K."/>
            <person name="Cunningham J.M."/>
        </authorList>
    </citation>
    <scope>NUCLEOTIDE SEQUENCE [MRNA] (ISOFORM 1)</scope>
    <scope>FUNCTION (MICROBIAL INFECTION)</scope>
    <source>
        <tissue>Fibroblast</tissue>
    </source>
</reference>
<reference key="3">
    <citation type="submission" date="1999-10" db="EMBL/GenBank/DDBJ databases">
        <title>Xenotropic and polytropic murine leukemia virus receptors from different species.</title>
        <authorList>
            <person name="Battini J.-L."/>
            <person name="Rasko J.E.J."/>
            <person name="Miller A.D."/>
        </authorList>
    </citation>
    <scope>NUCLEOTIDE SEQUENCE [MRNA] (ISOFORM 1)</scope>
</reference>
<reference key="4">
    <citation type="journal article" date="2005" name="Science">
        <title>The transcriptional landscape of the mammalian genome.</title>
        <authorList>
            <person name="Carninci P."/>
            <person name="Kasukawa T."/>
            <person name="Katayama S."/>
            <person name="Gough J."/>
            <person name="Frith M.C."/>
            <person name="Maeda N."/>
            <person name="Oyama R."/>
            <person name="Ravasi T."/>
            <person name="Lenhard B."/>
            <person name="Wells C."/>
            <person name="Kodzius R."/>
            <person name="Shimokawa K."/>
            <person name="Bajic V.B."/>
            <person name="Brenner S.E."/>
            <person name="Batalov S."/>
            <person name="Forrest A.R."/>
            <person name="Zavolan M."/>
            <person name="Davis M.J."/>
            <person name="Wilming L.G."/>
            <person name="Aidinis V."/>
            <person name="Allen J.E."/>
            <person name="Ambesi-Impiombato A."/>
            <person name="Apweiler R."/>
            <person name="Aturaliya R.N."/>
            <person name="Bailey T.L."/>
            <person name="Bansal M."/>
            <person name="Baxter L."/>
            <person name="Beisel K.W."/>
            <person name="Bersano T."/>
            <person name="Bono H."/>
            <person name="Chalk A.M."/>
            <person name="Chiu K.P."/>
            <person name="Choudhary V."/>
            <person name="Christoffels A."/>
            <person name="Clutterbuck D.R."/>
            <person name="Crowe M.L."/>
            <person name="Dalla E."/>
            <person name="Dalrymple B.P."/>
            <person name="de Bono B."/>
            <person name="Della Gatta G."/>
            <person name="di Bernardo D."/>
            <person name="Down T."/>
            <person name="Engstrom P."/>
            <person name="Fagiolini M."/>
            <person name="Faulkner G."/>
            <person name="Fletcher C.F."/>
            <person name="Fukushima T."/>
            <person name="Furuno M."/>
            <person name="Futaki S."/>
            <person name="Gariboldi M."/>
            <person name="Georgii-Hemming P."/>
            <person name="Gingeras T.R."/>
            <person name="Gojobori T."/>
            <person name="Green R.E."/>
            <person name="Gustincich S."/>
            <person name="Harbers M."/>
            <person name="Hayashi Y."/>
            <person name="Hensch T.K."/>
            <person name="Hirokawa N."/>
            <person name="Hill D."/>
            <person name="Huminiecki L."/>
            <person name="Iacono M."/>
            <person name="Ikeo K."/>
            <person name="Iwama A."/>
            <person name="Ishikawa T."/>
            <person name="Jakt M."/>
            <person name="Kanapin A."/>
            <person name="Katoh M."/>
            <person name="Kawasawa Y."/>
            <person name="Kelso J."/>
            <person name="Kitamura H."/>
            <person name="Kitano H."/>
            <person name="Kollias G."/>
            <person name="Krishnan S.P."/>
            <person name="Kruger A."/>
            <person name="Kummerfeld S.K."/>
            <person name="Kurochkin I.V."/>
            <person name="Lareau L.F."/>
            <person name="Lazarevic D."/>
            <person name="Lipovich L."/>
            <person name="Liu J."/>
            <person name="Liuni S."/>
            <person name="McWilliam S."/>
            <person name="Madan Babu M."/>
            <person name="Madera M."/>
            <person name="Marchionni L."/>
            <person name="Matsuda H."/>
            <person name="Matsuzawa S."/>
            <person name="Miki H."/>
            <person name="Mignone F."/>
            <person name="Miyake S."/>
            <person name="Morris K."/>
            <person name="Mottagui-Tabar S."/>
            <person name="Mulder N."/>
            <person name="Nakano N."/>
            <person name="Nakauchi H."/>
            <person name="Ng P."/>
            <person name="Nilsson R."/>
            <person name="Nishiguchi S."/>
            <person name="Nishikawa S."/>
            <person name="Nori F."/>
            <person name="Ohara O."/>
            <person name="Okazaki Y."/>
            <person name="Orlando V."/>
            <person name="Pang K.C."/>
            <person name="Pavan W.J."/>
            <person name="Pavesi G."/>
            <person name="Pesole G."/>
            <person name="Petrovsky N."/>
            <person name="Piazza S."/>
            <person name="Reed J."/>
            <person name="Reid J.F."/>
            <person name="Ring B.Z."/>
            <person name="Ringwald M."/>
            <person name="Rost B."/>
            <person name="Ruan Y."/>
            <person name="Salzberg S.L."/>
            <person name="Sandelin A."/>
            <person name="Schneider C."/>
            <person name="Schoenbach C."/>
            <person name="Sekiguchi K."/>
            <person name="Semple C.A."/>
            <person name="Seno S."/>
            <person name="Sessa L."/>
            <person name="Sheng Y."/>
            <person name="Shibata Y."/>
            <person name="Shimada H."/>
            <person name="Shimada K."/>
            <person name="Silva D."/>
            <person name="Sinclair B."/>
            <person name="Sperling S."/>
            <person name="Stupka E."/>
            <person name="Sugiura K."/>
            <person name="Sultana R."/>
            <person name="Takenaka Y."/>
            <person name="Taki K."/>
            <person name="Tammoja K."/>
            <person name="Tan S.L."/>
            <person name="Tang S."/>
            <person name="Taylor M.S."/>
            <person name="Tegner J."/>
            <person name="Teichmann S.A."/>
            <person name="Ueda H.R."/>
            <person name="van Nimwegen E."/>
            <person name="Verardo R."/>
            <person name="Wei C.L."/>
            <person name="Yagi K."/>
            <person name="Yamanishi H."/>
            <person name="Zabarovsky E."/>
            <person name="Zhu S."/>
            <person name="Zimmer A."/>
            <person name="Hide W."/>
            <person name="Bult C."/>
            <person name="Grimmond S.M."/>
            <person name="Teasdale R.D."/>
            <person name="Liu E.T."/>
            <person name="Brusic V."/>
            <person name="Quackenbush J."/>
            <person name="Wahlestedt C."/>
            <person name="Mattick J.S."/>
            <person name="Hume D.A."/>
            <person name="Kai C."/>
            <person name="Sasaki D."/>
            <person name="Tomaru Y."/>
            <person name="Fukuda S."/>
            <person name="Kanamori-Katayama M."/>
            <person name="Suzuki M."/>
            <person name="Aoki J."/>
            <person name="Arakawa T."/>
            <person name="Iida J."/>
            <person name="Imamura K."/>
            <person name="Itoh M."/>
            <person name="Kato T."/>
            <person name="Kawaji H."/>
            <person name="Kawagashira N."/>
            <person name="Kawashima T."/>
            <person name="Kojima M."/>
            <person name="Kondo S."/>
            <person name="Konno H."/>
            <person name="Nakano K."/>
            <person name="Ninomiya N."/>
            <person name="Nishio T."/>
            <person name="Okada M."/>
            <person name="Plessy C."/>
            <person name="Shibata K."/>
            <person name="Shiraki T."/>
            <person name="Suzuki S."/>
            <person name="Tagami M."/>
            <person name="Waki K."/>
            <person name="Watahiki A."/>
            <person name="Okamura-Oho Y."/>
            <person name="Suzuki H."/>
            <person name="Kawai J."/>
            <person name="Hayashizaki Y."/>
        </authorList>
    </citation>
    <scope>NUCLEOTIDE SEQUENCE [LARGE SCALE MRNA] (ISOFORMS 1 AND 2)</scope>
    <source>
        <strain>C57BL/6J</strain>
        <tissue>Colon</tissue>
        <tissue>Embryo</tissue>
        <tissue>Olfactory bulb</tissue>
    </source>
</reference>
<reference key="5">
    <citation type="journal article" date="2004" name="Genome Res.">
        <title>The status, quality, and expansion of the NIH full-length cDNA project: the Mammalian Gene Collection (MGC).</title>
        <authorList>
            <consortium name="The MGC Project Team"/>
        </authorList>
    </citation>
    <scope>NUCLEOTIDE SEQUENCE [LARGE SCALE MRNA] (ISOFORM 1)</scope>
</reference>
<reference key="6">
    <citation type="journal article" date="2007" name="J. Virol.">
        <title>Wild mouse variants of envelope genes of xenotropic/polytropic mouse gammaretroviruses and their XPR1 receptors elucidate receptor determinants of virus entry.</title>
        <authorList>
            <person name="Yan Y."/>
            <person name="Knoper R.C."/>
            <person name="Kozak C.A."/>
        </authorList>
    </citation>
    <scope>RECEPTOR FOR MURINE RETROVIRUSES</scope>
    <scope>MUTAGENESIS OF GLU-500</scope>
</reference>
<reference key="7">
    <citation type="journal article" date="2009" name="Immunity">
        <title>The phagosomal proteome in interferon-gamma-activated macrophages.</title>
        <authorList>
            <person name="Trost M."/>
            <person name="English L."/>
            <person name="Lemieux S."/>
            <person name="Courcelles M."/>
            <person name="Desjardins M."/>
            <person name="Thibault P."/>
        </authorList>
    </citation>
    <scope>PHOSPHORYLATION [LARGE SCALE ANALYSIS] AT SER-667 AND THR-689</scope>
    <scope>IDENTIFICATION BY MASS SPECTROMETRY [LARGE SCALE ANALYSIS]</scope>
</reference>
<reference key="8">
    <citation type="journal article" date="2010" name="Cell">
        <title>A tissue-specific atlas of mouse protein phosphorylation and expression.</title>
        <authorList>
            <person name="Huttlin E.L."/>
            <person name="Jedrychowski M.P."/>
            <person name="Elias J.E."/>
            <person name="Goswami T."/>
            <person name="Rad R."/>
            <person name="Beausoleil S.A."/>
            <person name="Villen J."/>
            <person name="Haas W."/>
            <person name="Sowa M.E."/>
            <person name="Gygi S.P."/>
        </authorList>
    </citation>
    <scope>PHOSPHORYLATION [LARGE SCALE ANALYSIS] AT THR-689</scope>
    <scope>IDENTIFICATION BY MASS SPECTROMETRY [LARGE SCALE ANALYSIS]</scope>
    <source>
        <tissue>Brain</tissue>
    </source>
</reference>
<reference key="9">
    <citation type="journal article" date="2021" name="Diabetes">
        <title>XPR1 Mediates the Pancreatic beta-Cell Phosphate Flush.</title>
        <authorList>
            <person name="Barker C.J."/>
            <person name="Tessaro F.H.G."/>
            <person name="Ferreira S.S."/>
            <person name="Simas R."/>
            <person name="Ayala T.S."/>
            <person name="Koehler M."/>
            <person name="Rajasekaran S.S."/>
            <person name="Martins J.O."/>
            <person name="Dare E."/>
            <person name="Berggren P.O."/>
        </authorList>
    </citation>
    <scope>FUNCTION</scope>
    <scope>TRANSPORTER ACTIVITY</scope>
    <scope>TISSUE SPECIFICITY</scope>
</reference>
<accession>Q9Z0U0</accession>
<accession>Q3UHG6</accession>
<accession>Q3UR99</accession>
<accession>Q8CCC8</accession>
<accession>Q8CCT2</accession>
<accession>Q9QZ72</accession>
<accession>Q9R034</accession>
<accession>Q9R036</accession>
<sequence length="695" mass="81751">MKFAEHLSAHITPEWRKQYIQYEAFKDMLYSAQDQAPSVEVTDEDTVKRYFAKFEEKFFQTCEKELAKINTFYSEKLAEAQRRFATLQNELQSSLDVQKESSGVTTLRQRRKPVFHLSHEERVQHRNIKDLKLAFSEFYLSLILLQNYQNLNFTGFRKILKKHDKILETSRGADWRVIHVEVAPFYTCKKINQLISETEAVVTNELEDGDRQKAMKRLRVPPLGAAQPAPAWTTFRVGLFCGIFIVLNITLVFAAVFKLETDRTVWPLIRIYRGGFLLIEFLFLLGINTYGWRQAGVNHVLIFELNPRNNLSHQHLFEIAGFLGILWCLSLLACFFAPISIIPIYVYPLALYGFMVFFLINPTKTFYYKSRFWLLKLLFRVFTAPFHKVGFADFWLADQLNSLSVILMDLEYMICFYSFELKWDESKGLLPNDPQEPEFCHKYSYGVRAIVQCIPAWLRFIQCLRRYRDTRRAFPHLVNAGKYSTTFFTVTFAALYSTHEEQNHSDTVVFFYLWVFFCIISSCYTLIWDLKMDWGLFDKNAGENTFLREEIVYPQKAYYYCAIIEDVILRFAWTIQISITATFKPHVGNIIATVFAPLEVFRRFVWNFFRLENEHLNNCGEFRAVRDISVAPLNADDQTLLEQMMDQEDGVRNRQKNRSWKYNQSISLRRPRLASQSKARDTKVLIEDTDDEANT</sequence>
<evidence type="ECO:0000250" key="1">
    <source>
        <dbReference type="UniProtKB" id="Q9UBH6"/>
    </source>
</evidence>
<evidence type="ECO:0000255" key="2">
    <source>
        <dbReference type="PROSITE-ProRule" id="PRU00712"/>
    </source>
</evidence>
<evidence type="ECO:0000256" key="3">
    <source>
        <dbReference type="SAM" id="MobiDB-lite"/>
    </source>
</evidence>
<evidence type="ECO:0000269" key="4">
    <source>
    </source>
</evidence>
<evidence type="ECO:0000269" key="5">
    <source>
    </source>
</evidence>
<evidence type="ECO:0000269" key="6">
    <source>
    </source>
</evidence>
<evidence type="ECO:0000269" key="7">
    <source>
    </source>
</evidence>
<evidence type="ECO:0000303" key="8">
    <source>
    </source>
</evidence>
<evidence type="ECO:0000303" key="9">
    <source>
    </source>
</evidence>
<evidence type="ECO:0000303" key="10">
    <source>
    </source>
</evidence>
<evidence type="ECO:0000305" key="11"/>
<evidence type="ECO:0000305" key="12">
    <source>
    </source>
</evidence>
<evidence type="ECO:0007744" key="13">
    <source>
    </source>
</evidence>
<evidence type="ECO:0007744" key="14">
    <source>
    </source>
</evidence>
<name>S53A1_MOUSE</name>
<feature type="chain" id="PRO_0000315854" description="Solute carrier family 53 member 1">
    <location>
        <begin position="1"/>
        <end position="695"/>
    </location>
</feature>
<feature type="topological domain" description="Cytoplasmic" evidence="1">
    <location>
        <begin position="1"/>
        <end position="228"/>
    </location>
</feature>
<feature type="transmembrane region" description="Helical; Name=1" evidence="1">
    <location>
        <begin position="229"/>
        <end position="259"/>
    </location>
</feature>
<feature type="topological domain" description="Extracellular" evidence="1">
    <location>
        <begin position="260"/>
        <end position="264"/>
    </location>
</feature>
<feature type="transmembrane region" description="Helical; Name=2" evidence="1">
    <location>
        <begin position="265"/>
        <end position="296"/>
    </location>
</feature>
<feature type="topological domain" description="Cytoplasmic" evidence="1">
    <location>
        <begin position="297"/>
        <end position="309"/>
    </location>
</feature>
<feature type="transmembrane region" description="Helical; Name=3" evidence="1">
    <location>
        <begin position="310"/>
        <end position="337"/>
    </location>
</feature>
<feature type="topological domain" description="Extracellular" evidence="1">
    <location>
        <begin position="338"/>
        <end position="343"/>
    </location>
</feature>
<feature type="transmembrane region" description="Helical; Name=4" evidence="1">
    <location>
        <begin position="344"/>
        <end position="365"/>
    </location>
</feature>
<feature type="intramembrane region" description="Helical" evidence="1">
    <location>
        <begin position="366"/>
        <end position="383"/>
    </location>
</feature>
<feature type="topological domain" description="Cytoplasmic" evidence="1">
    <location>
        <begin position="384"/>
        <end position="388"/>
    </location>
</feature>
<feature type="transmembrane region" description="Discontinuously helical; Name=5" evidence="1">
    <location>
        <begin position="389"/>
        <end position="422"/>
    </location>
</feature>
<feature type="topological domain" description="Extracellular" evidence="1">
    <location>
        <begin position="423"/>
        <end position="429"/>
    </location>
</feature>
<feature type="transmembrane region" description="Discontinuously helical; Name=6" evidence="1">
    <location>
        <begin position="430"/>
        <end position="471"/>
    </location>
</feature>
<feature type="topological domain" description="Cytoplasmic" evidence="1">
    <location>
        <position position="472"/>
    </location>
</feature>
<feature type="transmembrane region" description="Helical; Name=7" evidence="1">
    <location>
        <begin position="473"/>
        <end position="503"/>
    </location>
</feature>
<feature type="topological domain" description="Extracellular" evidence="1">
    <location>
        <begin position="504"/>
        <end position="506"/>
    </location>
</feature>
<feature type="transmembrane region" description="Helical; Name=8" evidence="1">
    <location>
        <begin position="507"/>
        <end position="534"/>
    </location>
</feature>
<feature type="topological domain" description="Cytoplasmic" evidence="1 11">
    <location>
        <begin position="535"/>
        <end position="553"/>
    </location>
</feature>
<feature type="transmembrane region" description="Discontinuously helical; Name=9" evidence="1">
    <location>
        <begin position="554"/>
        <end position="584"/>
    </location>
</feature>
<feature type="topological domain" description="Extracellular" evidence="1">
    <location>
        <begin position="585"/>
        <end position="586"/>
    </location>
</feature>
<feature type="transmembrane region" description="Helical; Name=10" evidence="1">
    <location>
        <begin position="587"/>
        <end position="625"/>
    </location>
</feature>
<feature type="topological domain" description="Cytoplasmic" evidence="1">
    <location>
        <begin position="626"/>
        <end position="695"/>
    </location>
</feature>
<feature type="domain" description="SPX" evidence="1">
    <location>
        <begin position="2"/>
        <end position="224"/>
    </location>
</feature>
<feature type="domain" description="EXS" evidence="2">
    <location>
        <begin position="439"/>
        <end position="642"/>
    </location>
</feature>
<feature type="region of interest" description="Important for inositol polyphosphate binding" evidence="1">
    <location>
        <begin position="158"/>
        <end position="165"/>
    </location>
</feature>
<feature type="region of interest" description="Disordered" evidence="3">
    <location>
        <begin position="671"/>
        <end position="695"/>
    </location>
</feature>
<feature type="binding site" evidence="1">
    <location>
        <position position="398"/>
    </location>
    <ligand>
        <name>phosphate</name>
        <dbReference type="ChEBI" id="CHEBI:43474"/>
    </ligand>
</feature>
<feature type="binding site" evidence="1">
    <location>
        <position position="401"/>
    </location>
    <ligand>
        <name>phosphate</name>
        <dbReference type="ChEBI" id="CHEBI:43474"/>
    </ligand>
</feature>
<feature type="binding site" evidence="1">
    <location>
        <position position="482"/>
    </location>
    <ligand>
        <name>phosphate</name>
        <dbReference type="ChEBI" id="CHEBI:43474"/>
    </ligand>
</feature>
<feature type="binding site" evidence="1">
    <location>
        <position position="483"/>
    </location>
    <ligand>
        <name>phosphate</name>
        <dbReference type="ChEBI" id="CHEBI:43474"/>
    </ligand>
</feature>
<feature type="binding site" evidence="1">
    <location>
        <position position="570"/>
    </location>
    <ligand>
        <name>phosphate</name>
        <dbReference type="ChEBI" id="CHEBI:43474"/>
    </ligand>
</feature>
<feature type="binding site" evidence="1">
    <location>
        <position position="602"/>
    </location>
    <ligand>
        <name>phosphate</name>
        <dbReference type="ChEBI" id="CHEBI:43474"/>
    </ligand>
</feature>
<feature type="binding site" evidence="1">
    <location>
        <position position="603"/>
    </location>
    <ligand>
        <name>phosphate</name>
        <dbReference type="ChEBI" id="CHEBI:43474"/>
    </ligand>
</feature>
<feature type="site" description="Gating residue for phosphate transport" evidence="1">
    <location>
        <position position="573"/>
    </location>
</feature>
<feature type="modified residue" description="Phosphoserine" evidence="13">
    <location>
        <position position="667"/>
    </location>
</feature>
<feature type="modified residue" description="Phosphothreonine" evidence="13 14">
    <location>
        <position position="689"/>
    </location>
</feature>
<feature type="splice variant" id="VSP_030749" description="In isoform 2." evidence="8">
    <original>SKARDTKVLIEDTDDEANT</original>
    <variation>YVE</variation>
    <location>
        <begin position="677"/>
        <end position="695"/>
    </location>
</feature>
<feature type="mutagenesis site" description="Gives susceptibility to xenotropic murine leukemia retroviruses infection." evidence="5">
    <original>E</original>
    <variation>K</variation>
    <location>
        <position position="500"/>
    </location>
</feature>
<feature type="mutagenesis site" description="Gives susceptibility to xenotropic murine leukemia retroviruses infection." evidence="4">
    <original>T</original>
    <variation>TT</variation>
    <location>
        <position position="582"/>
    </location>
</feature>
<feature type="sequence conflict" description="In Ref. 3; AAF13256." evidence="11" ref="3">
    <original>F</original>
    <variation>S</variation>
    <location>
        <position position="59"/>
    </location>
</feature>
<feature type="sequence conflict" description="In Ref. 1; AAF03484." evidence="11" ref="1">
    <original>F</original>
    <variation>L</variation>
    <location>
        <position position="72"/>
    </location>
</feature>
<feature type="sequence conflict" description="In Ref. 1; AAF03484." evidence="11" ref="1">
    <original>G</original>
    <variation>A</variation>
    <location>
        <position position="103"/>
    </location>
</feature>
<feature type="sequence conflict" description="In Ref. 1; AAF03484." evidence="11" ref="1">
    <original>T</original>
    <variation>A</variation>
    <location>
        <position position="106"/>
    </location>
</feature>
<feature type="sequence conflict" description="In Ref. 4; BAE27891." evidence="11" ref="4">
    <original>K</original>
    <variation>E</variation>
    <location>
        <position position="158"/>
    </location>
</feature>
<feature type="sequence conflict" description="In Ref. 1; AAF03482." evidence="11" ref="1">
    <original>F</original>
    <variation>L</variation>
    <location>
        <position position="372"/>
    </location>
</feature>
<feature type="sequence conflict" description="In Ref. 1; AAF03484." evidence="11" ref="1">
    <original>L</original>
    <variation>P</variation>
    <location>
        <position position="377"/>
    </location>
</feature>
<feature type="sequence conflict" description="In Ref. 1; AAF03482." evidence="11" ref="1">
    <original>D</original>
    <variation>N</variation>
    <location>
        <position position="469"/>
    </location>
</feature>
<feature type="sequence conflict" description="In Ref. 1; AAF03484." evidence="11" ref="1">
    <original>EEQN</original>
    <variation>KERG</variation>
    <location>
        <begin position="500"/>
        <end position="503"/>
    </location>
</feature>
<feature type="sequence conflict" description="In Ref. 1; AAF03484." evidence="11" ref="1">
    <original>V</original>
    <variation>M</variation>
    <location>
        <position position="508"/>
    </location>
</feature>
<feature type="sequence conflict" description="In Ref. 1; AAF03484." evidence="11" ref="1">
    <original>VFFC</original>
    <variation>IVFY</variation>
    <location>
        <begin position="515"/>
        <end position="518"/>
    </location>
</feature>
<feature type="sequence conflict" description="In Ref. 3; AAF13256." evidence="11" ref="3">
    <original>I</original>
    <variation>T</variation>
    <location>
        <position position="564"/>
    </location>
</feature>
<feature type="sequence conflict" description="In Ref. 1; AAF03484." evidence="11" ref="1">
    <original>T</original>
    <variation>TT</variation>
    <location>
        <position position="582"/>
    </location>
</feature>
<feature type="sequence conflict" description="In Ref. 1; AAF03484." evidence="11" ref="1">
    <original>N</original>
    <variation>D</variation>
    <location>
        <position position="589"/>
    </location>
</feature>
<feature type="sequence conflict" description="In Ref. 4; BAE27891." evidence="11" ref="4">
    <original>I</original>
    <variation>S</variation>
    <location>
        <position position="591"/>
    </location>
</feature>
<feature type="sequence conflict" description="In Ref. 1; AAF03484." evidence="11" ref="1">
    <original>W</original>
    <variation>L</variation>
    <location>
        <position position="606"/>
    </location>
</feature>
<feature type="sequence conflict" description="In Ref. 4; BAE24789." evidence="11" ref="4">
    <original>Q</original>
    <variation>R</variation>
    <location>
        <position position="647"/>
    </location>
</feature>
<proteinExistence type="evidence at protein level"/>
<comment type="function">
    <text evidence="1 6">Inorganic ion transporter that mediates phosphate ion export across plasma membrane (PubMed:32826297). Plays a major role in phosphate homeostasis, preventing intracellular phosphate accumulation and possible calcium phosphate precipitation, ultimately preserving calcium signaling (By similarity). Binds inositol hexakisphosphate (Ins6P) and similar inositol polyphosphates, such as 5-diphospho-inositol pentakisphosphate (5-InsP7), which are important intracellular signaling molecules involved in regulation of phosphate flux (By similarity).</text>
</comment>
<comment type="function">
    <text evidence="4 7">(Microbial infection) Receptor for xenotropic and polytropic murine leukemia (X- and P-MLV) retroviruses. Confers susceptibility to X- or P-MLV infection in vitro.</text>
</comment>
<comment type="catalytic activity">
    <reaction evidence="1 12">
        <text>phosphate(in) = phosphate(out)</text>
        <dbReference type="Rhea" id="RHEA:32823"/>
        <dbReference type="ChEBI" id="CHEBI:43474"/>
    </reaction>
    <physiologicalReaction direction="left-to-right" evidence="12">
        <dbReference type="Rhea" id="RHEA:32824"/>
    </physiologicalReaction>
</comment>
<comment type="subunit">
    <text evidence="1">Homodimer.</text>
</comment>
<comment type="subcellular location">
    <subcellularLocation>
        <location evidence="1">Cell membrane</location>
        <topology evidence="1">Multi-pass membrane protein</topology>
    </subcellularLocation>
</comment>
<comment type="alternative products">
    <event type="alternative splicing"/>
    <isoform>
        <id>Q9Z0U0-1</id>
        <name>1</name>
        <sequence type="displayed"/>
    </isoform>
    <isoform>
        <id>Q9Z0U0-2</id>
        <name>2</name>
        <sequence type="described" ref="VSP_030749"/>
    </isoform>
</comment>
<comment type="tissue specificity">
    <text evidence="6">Expressed in pancreatic islets.</text>
</comment>
<comment type="domain">
    <text evidence="1">The SPX domain plays a role in the regulation of phosphate flux (By similarity). Inositol hexakisphosphate (Ins6P) is bound between two SPX domains of the homodimer (By similarity). The SPX domain has high affinity for inositol polyphosphates and its affinity for inorganic phosphate is two to three orders of magnitude lower (By similarity).</text>
</comment>
<comment type="similarity">
    <text evidence="11">Belongs to the SYG1 (TC 2.A.94) family.</text>
</comment>